<keyword id="KW-0963">Cytoplasm</keyword>
<name>RECX_MYCSK</name>
<comment type="function">
    <text evidence="1">Modulates RecA activity.</text>
</comment>
<comment type="subcellular location">
    <subcellularLocation>
        <location evidence="1">Cytoplasm</location>
    </subcellularLocation>
</comment>
<comment type="similarity">
    <text evidence="1">Belongs to the RecX family.</text>
</comment>
<sequence>MTSFPHPSTSESGPDPDSEPNREEQAHAYCLRLLTARARTRAELAGKLTQRGYDEPVVARVLDRLVDVGLVDDEDFAEQWVRSRHLYAGKGKRALAAELRRKGVDDEVISSSLADIDAGAERDRAERLVRDRLRREKLDDEPGSDLKVKRRLAGMLARRGYSQSMALDVVTVELAGERERRRV</sequence>
<dbReference type="EMBL" id="CP000518">
    <property type="protein sequence ID" value="ABL91392.1"/>
    <property type="molecule type" value="Genomic_DNA"/>
</dbReference>
<dbReference type="SMR" id="A1UEY4"/>
<dbReference type="STRING" id="189918.Mkms_2194"/>
<dbReference type="KEGG" id="mkm:Mkms_2194"/>
<dbReference type="HOGENOM" id="CLU_066607_0_2_11"/>
<dbReference type="OrthoDB" id="5244465at2"/>
<dbReference type="GO" id="GO:0005737">
    <property type="term" value="C:cytoplasm"/>
    <property type="evidence" value="ECO:0007669"/>
    <property type="project" value="UniProtKB-SubCell"/>
</dbReference>
<dbReference type="GO" id="GO:0006282">
    <property type="term" value="P:regulation of DNA repair"/>
    <property type="evidence" value="ECO:0007669"/>
    <property type="project" value="UniProtKB-UniRule"/>
</dbReference>
<dbReference type="Gene3D" id="1.10.10.10">
    <property type="entry name" value="Winged helix-like DNA-binding domain superfamily/Winged helix DNA-binding domain"/>
    <property type="match status" value="2"/>
</dbReference>
<dbReference type="HAMAP" id="MF_01114">
    <property type="entry name" value="RecX"/>
    <property type="match status" value="1"/>
</dbReference>
<dbReference type="InterPro" id="IPR053926">
    <property type="entry name" value="RecX_HTH_1st"/>
</dbReference>
<dbReference type="InterPro" id="IPR053924">
    <property type="entry name" value="RecX_HTH_2nd"/>
</dbReference>
<dbReference type="InterPro" id="IPR003783">
    <property type="entry name" value="Regulatory_RecX"/>
</dbReference>
<dbReference type="InterPro" id="IPR036388">
    <property type="entry name" value="WH-like_DNA-bd_sf"/>
</dbReference>
<dbReference type="NCBIfam" id="NF001056">
    <property type="entry name" value="PRK00117.3-1"/>
    <property type="match status" value="1"/>
</dbReference>
<dbReference type="PANTHER" id="PTHR33602">
    <property type="entry name" value="REGULATORY PROTEIN RECX FAMILY PROTEIN"/>
    <property type="match status" value="1"/>
</dbReference>
<dbReference type="PANTHER" id="PTHR33602:SF1">
    <property type="entry name" value="REGULATORY PROTEIN RECX FAMILY PROTEIN"/>
    <property type="match status" value="1"/>
</dbReference>
<dbReference type="Pfam" id="PF21982">
    <property type="entry name" value="RecX_HTH1"/>
    <property type="match status" value="1"/>
</dbReference>
<dbReference type="Pfam" id="PF02631">
    <property type="entry name" value="RecX_HTH2"/>
    <property type="match status" value="1"/>
</dbReference>
<reference key="1">
    <citation type="submission" date="2006-12" db="EMBL/GenBank/DDBJ databases">
        <title>Complete sequence of chromosome of Mycobacterium sp. KMS.</title>
        <authorList>
            <consortium name="US DOE Joint Genome Institute"/>
            <person name="Copeland A."/>
            <person name="Lucas S."/>
            <person name="Lapidus A."/>
            <person name="Barry K."/>
            <person name="Detter J.C."/>
            <person name="Glavina del Rio T."/>
            <person name="Hammon N."/>
            <person name="Israni S."/>
            <person name="Dalin E."/>
            <person name="Tice H."/>
            <person name="Pitluck S."/>
            <person name="Kiss H."/>
            <person name="Brettin T."/>
            <person name="Bruce D."/>
            <person name="Han C."/>
            <person name="Tapia R."/>
            <person name="Gilna P."/>
            <person name="Schmutz J."/>
            <person name="Larimer F."/>
            <person name="Land M."/>
            <person name="Hauser L."/>
            <person name="Kyrpides N."/>
            <person name="Mikhailova N."/>
            <person name="Miller C.D."/>
            <person name="Richardson P."/>
        </authorList>
    </citation>
    <scope>NUCLEOTIDE SEQUENCE [LARGE SCALE GENOMIC DNA]</scope>
    <source>
        <strain>KMS</strain>
    </source>
</reference>
<protein>
    <recommendedName>
        <fullName evidence="1">Regulatory protein RecX</fullName>
    </recommendedName>
</protein>
<evidence type="ECO:0000255" key="1">
    <source>
        <dbReference type="HAMAP-Rule" id="MF_01114"/>
    </source>
</evidence>
<evidence type="ECO:0000256" key="2">
    <source>
        <dbReference type="SAM" id="MobiDB-lite"/>
    </source>
</evidence>
<accession>A1UEY4</accession>
<organism>
    <name type="scientific">Mycobacterium sp. (strain KMS)</name>
    <dbReference type="NCBI Taxonomy" id="189918"/>
    <lineage>
        <taxon>Bacteria</taxon>
        <taxon>Bacillati</taxon>
        <taxon>Actinomycetota</taxon>
        <taxon>Actinomycetes</taxon>
        <taxon>Mycobacteriales</taxon>
        <taxon>Mycobacteriaceae</taxon>
        <taxon>Mycobacterium</taxon>
    </lineage>
</organism>
<gene>
    <name evidence="1" type="primary">recX</name>
    <name type="ordered locus">Mkms_2194</name>
</gene>
<proteinExistence type="inferred from homology"/>
<feature type="chain" id="PRO_1000084984" description="Regulatory protein RecX">
    <location>
        <begin position="1"/>
        <end position="183"/>
    </location>
</feature>
<feature type="region of interest" description="Disordered" evidence="2">
    <location>
        <begin position="1"/>
        <end position="26"/>
    </location>
</feature>
<feature type="compositionally biased region" description="Polar residues" evidence="2">
    <location>
        <begin position="1"/>
        <end position="12"/>
    </location>
</feature>